<organism>
    <name type="scientific">Mycobacterium leprae (strain TN)</name>
    <dbReference type="NCBI Taxonomy" id="272631"/>
    <lineage>
        <taxon>Bacteria</taxon>
        <taxon>Bacillati</taxon>
        <taxon>Actinomycetota</taxon>
        <taxon>Actinomycetes</taxon>
        <taxon>Mycobacteriales</taxon>
        <taxon>Mycobacteriaceae</taxon>
        <taxon>Mycobacterium</taxon>
    </lineage>
</organism>
<keyword id="KW-0067">ATP-binding</keyword>
<keyword id="KW-0227">DNA damage</keyword>
<keyword id="KW-0234">DNA repair</keyword>
<keyword id="KW-0547">Nucleotide-binding</keyword>
<keyword id="KW-1185">Reference proteome</keyword>
<evidence type="ECO:0000250" key="1"/>
<evidence type="ECO:0000255" key="2"/>
<evidence type="ECO:0000305" key="3"/>
<dbReference type="EMBL" id="U00021">
    <property type="protein sequence ID" value="AAA50914.1"/>
    <property type="molecule type" value="Genomic_DNA"/>
</dbReference>
<dbReference type="EMBL" id="Z95117">
    <property type="protein sequence ID" value="CAB08275.1"/>
    <property type="molecule type" value="Genomic_DNA"/>
</dbReference>
<dbReference type="EMBL" id="AL583921">
    <property type="protein sequence ID" value="CAC31741.1"/>
    <property type="molecule type" value="Genomic_DNA"/>
</dbReference>
<dbReference type="PIR" id="S72966">
    <property type="entry name" value="S72966"/>
</dbReference>
<dbReference type="RefSeq" id="NP_301970.1">
    <property type="nucleotide sequence ID" value="NC_002677.1"/>
</dbReference>
<dbReference type="RefSeq" id="WP_010908291.1">
    <property type="nucleotide sequence ID" value="NC_002677.1"/>
</dbReference>
<dbReference type="SMR" id="Q49896"/>
<dbReference type="STRING" id="272631.gene:17575198"/>
<dbReference type="KEGG" id="mle:ML1360"/>
<dbReference type="PATRIC" id="fig|272631.5.peg.2517"/>
<dbReference type="Leproma" id="ML1360"/>
<dbReference type="eggNOG" id="COG0497">
    <property type="taxonomic scope" value="Bacteria"/>
</dbReference>
<dbReference type="HOGENOM" id="CLU_018297_3_0_11"/>
<dbReference type="OrthoDB" id="9806954at2"/>
<dbReference type="Proteomes" id="UP000000806">
    <property type="component" value="Chromosome"/>
</dbReference>
<dbReference type="GO" id="GO:0043590">
    <property type="term" value="C:bacterial nucleoid"/>
    <property type="evidence" value="ECO:0007669"/>
    <property type="project" value="TreeGrafter"/>
</dbReference>
<dbReference type="GO" id="GO:0005524">
    <property type="term" value="F:ATP binding"/>
    <property type="evidence" value="ECO:0007669"/>
    <property type="project" value="UniProtKB-KW"/>
</dbReference>
<dbReference type="GO" id="GO:0006310">
    <property type="term" value="P:DNA recombination"/>
    <property type="evidence" value="ECO:0007669"/>
    <property type="project" value="InterPro"/>
</dbReference>
<dbReference type="GO" id="GO:0006281">
    <property type="term" value="P:DNA repair"/>
    <property type="evidence" value="ECO:0007669"/>
    <property type="project" value="UniProtKB-KW"/>
</dbReference>
<dbReference type="GO" id="GO:0009432">
    <property type="term" value="P:SOS response"/>
    <property type="evidence" value="ECO:0007669"/>
    <property type="project" value="TreeGrafter"/>
</dbReference>
<dbReference type="CDD" id="cd03241">
    <property type="entry name" value="ABC_RecN"/>
    <property type="match status" value="1"/>
</dbReference>
<dbReference type="FunFam" id="3.40.50.300:FF:000356">
    <property type="entry name" value="DNA repair protein RecN"/>
    <property type="match status" value="1"/>
</dbReference>
<dbReference type="Gene3D" id="3.40.50.300">
    <property type="entry name" value="P-loop containing nucleotide triphosphate hydrolases"/>
    <property type="match status" value="2"/>
</dbReference>
<dbReference type="InterPro" id="IPR004604">
    <property type="entry name" value="DNA_recomb/repair_RecN"/>
</dbReference>
<dbReference type="InterPro" id="IPR027417">
    <property type="entry name" value="P-loop_NTPase"/>
</dbReference>
<dbReference type="InterPro" id="IPR003395">
    <property type="entry name" value="RecF/RecN/SMC_N"/>
</dbReference>
<dbReference type="NCBIfam" id="TIGR00634">
    <property type="entry name" value="recN"/>
    <property type="match status" value="1"/>
</dbReference>
<dbReference type="PANTHER" id="PTHR11059">
    <property type="entry name" value="DNA REPAIR PROTEIN RECN"/>
    <property type="match status" value="1"/>
</dbReference>
<dbReference type="PANTHER" id="PTHR11059:SF0">
    <property type="entry name" value="DNA REPAIR PROTEIN RECN"/>
    <property type="match status" value="1"/>
</dbReference>
<dbReference type="Pfam" id="PF02463">
    <property type="entry name" value="SMC_N"/>
    <property type="match status" value="1"/>
</dbReference>
<dbReference type="PIRSF" id="PIRSF003128">
    <property type="entry name" value="RecN"/>
    <property type="match status" value="1"/>
</dbReference>
<dbReference type="SUPFAM" id="SSF52540">
    <property type="entry name" value="P-loop containing nucleoside triphosphate hydrolases"/>
    <property type="match status" value="2"/>
</dbReference>
<reference key="1">
    <citation type="submission" date="1994-09" db="EMBL/GenBank/DDBJ databases">
        <authorList>
            <person name="Smith D.R."/>
            <person name="Robison K."/>
        </authorList>
    </citation>
    <scope>NUCLEOTIDE SEQUENCE [GENOMIC DNA]</scope>
</reference>
<reference key="2">
    <citation type="journal article" date="2001" name="Nature">
        <title>Massive gene decay in the leprosy bacillus.</title>
        <authorList>
            <person name="Cole S.T."/>
            <person name="Eiglmeier K."/>
            <person name="Parkhill J."/>
            <person name="James K.D."/>
            <person name="Thomson N.R."/>
            <person name="Wheeler P.R."/>
            <person name="Honore N."/>
            <person name="Garnier T."/>
            <person name="Churcher C.M."/>
            <person name="Harris D.E."/>
            <person name="Mungall K.L."/>
            <person name="Basham D."/>
            <person name="Brown D."/>
            <person name="Chillingworth T."/>
            <person name="Connor R."/>
            <person name="Davies R.M."/>
            <person name="Devlin K."/>
            <person name="Duthoy S."/>
            <person name="Feltwell T."/>
            <person name="Fraser A."/>
            <person name="Hamlin N."/>
            <person name="Holroyd S."/>
            <person name="Hornsby T."/>
            <person name="Jagels K."/>
            <person name="Lacroix C."/>
            <person name="Maclean J."/>
            <person name="Moule S."/>
            <person name="Murphy L.D."/>
            <person name="Oliver K."/>
            <person name="Quail M.A."/>
            <person name="Rajandream M.A."/>
            <person name="Rutherford K.M."/>
            <person name="Rutter S."/>
            <person name="Seeger K."/>
            <person name="Simon S."/>
            <person name="Simmonds M."/>
            <person name="Skelton J."/>
            <person name="Squares R."/>
            <person name="Squares S."/>
            <person name="Stevens K."/>
            <person name="Taylor K."/>
            <person name="Whitehead S."/>
            <person name="Woodward J.R."/>
            <person name="Barrell B.G."/>
        </authorList>
    </citation>
    <scope>NUCLEOTIDE SEQUENCE [LARGE SCALE GENOMIC DNA]</scope>
    <source>
        <strain>TN</strain>
    </source>
</reference>
<protein>
    <recommendedName>
        <fullName>DNA repair protein RecN</fullName>
    </recommendedName>
    <alternativeName>
        <fullName>Recombination protein N</fullName>
    </alternativeName>
</protein>
<sequence length="587" mass="62724">MLTEIRIESLGAISVATAEFDRGLTVLTGETGTGKTMVVTGLHLLGGARADASRVRSGANRAVVEGRFTTTDLDDVVVAQLDGILNASGSERDEDGSVIVLRSVSRDGPSRSYLGGRSVPAKSLGSFTTELLALHGQNDQLRLVRPEEQRAALDRYAAAGPSCERYRELRDAWLLARSDLIDRRNRIRELVQEADRLKFALSEIDSVDPQPGEDNALVADIVRLSELDMLREVAVNARAALSGALDDMDVSGSNAVACMGQAKAALESTDDATLRAFADQVGEVLTVVVEVGRELGEYLEELPVDASALESKLVRQAELCTLTRKYAADIDGVLQWARESRERLEQLDVSYERLAGVESRVDELERQLSQAAVDLSKLRRDAANRLAKEVTAELSALAMVDAEFTISVTTDLIPLTDYKRSAAVTLPSGGVARAGADGVDQVEFGFAAHRGMTVLPLAKSASGGELSRVMLALEVVLATSAAGTTMVFDEVDVGVGGRAAVQIGRRLARLARTHQVIVVTHLPQVAAYADVHLVVHSAGLDGASDVRRLAGDDRVAELARMLAGLGESDSGRAHARELLDAARKDKS</sequence>
<name>RECN_MYCLE</name>
<accession>Q49896</accession>
<accession>O08103</accession>
<comment type="function">
    <text evidence="1">May be involved in recombinational repair of damaged DNA.</text>
</comment>
<comment type="similarity">
    <text evidence="3">Belongs to the RecN family.</text>
</comment>
<proteinExistence type="inferred from homology"/>
<feature type="chain" id="PRO_0000188021" description="DNA repair protein RecN">
    <location>
        <begin position="1"/>
        <end position="587"/>
    </location>
</feature>
<feature type="binding site" evidence="2">
    <location>
        <begin position="29"/>
        <end position="36"/>
    </location>
    <ligand>
        <name>ATP</name>
        <dbReference type="ChEBI" id="CHEBI:30616"/>
    </ligand>
</feature>
<gene>
    <name type="primary">recN</name>
    <name type="ordered locus">ML1360</name>
    <name type="ORF">MLC1351.12c</name>
</gene>